<name>UTP16_SCHPO</name>
<accession>O94259</accession>
<keyword id="KW-0175">Coiled coil</keyword>
<keyword id="KW-0539">Nucleus</keyword>
<keyword id="KW-0597">Phosphoprotein</keyword>
<keyword id="KW-1185">Reference proteome</keyword>
<keyword id="KW-0687">Ribonucleoprotein</keyword>
<keyword id="KW-0690">Ribosome biogenesis</keyword>
<keyword id="KW-0698">rRNA processing</keyword>
<feature type="chain" id="PRO_0000343135" description="U3 small nucleolar RNA-associated protein 16">
    <location>
        <begin position="1"/>
        <end position="327"/>
    </location>
</feature>
<feature type="region of interest" description="Disordered" evidence="4">
    <location>
        <begin position="151"/>
        <end position="218"/>
    </location>
</feature>
<feature type="coiled-coil region" evidence="3">
    <location>
        <begin position="180"/>
        <end position="219"/>
    </location>
</feature>
<feature type="compositionally biased region" description="Basic and acidic residues" evidence="4">
    <location>
        <begin position="194"/>
        <end position="215"/>
    </location>
</feature>
<feature type="modified residue" description="Phosphoserine" evidence="6">
    <location>
        <position position="163"/>
    </location>
</feature>
<feature type="modified residue" description="Phosphoserine" evidence="6">
    <location>
        <position position="165"/>
    </location>
</feature>
<evidence type="ECO:0000250" key="1">
    <source>
        <dbReference type="UniProtKB" id="Q08492"/>
    </source>
</evidence>
<evidence type="ECO:0000250" key="2">
    <source>
        <dbReference type="UniProtKB" id="Q9UMY1"/>
    </source>
</evidence>
<evidence type="ECO:0000255" key="3"/>
<evidence type="ECO:0000256" key="4">
    <source>
        <dbReference type="SAM" id="MobiDB-lite"/>
    </source>
</evidence>
<evidence type="ECO:0000269" key="5">
    <source>
    </source>
</evidence>
<evidence type="ECO:0000269" key="6">
    <source>
    </source>
</evidence>
<evidence type="ECO:0000305" key="7"/>
<sequence length="327" mass="37808">MQSSRKIMILKRNIKGLKSSAIIATYLTLNKLFIDKFCKTQESTYPIHFVHCHFGGIKKFHSHCQLSSSYTNSGQKSFKSFNSLRFIVLKSKTCLLRYKLLIKTFCCITYSKIENLSNTRMARLTAPSKGPSFSNLNKPNDLLKAEIEDNEASHYSQNQSSDSDSDEAPEEVSLKSSSDEVKKRLQRLKGNELQLRKAEREKRRLQNERNRERNAQRVSASKLDLAILEAAEVEEINSTTEIEEKVDEASLDLYTPKGHKIVFPNNEIPKKRTRSFRKGDFKVSVLKETNDPLLAPNYEKKLSQRKRDWINRQSVPRASKRRRPLTY</sequence>
<dbReference type="EMBL" id="CU329671">
    <property type="protein sequence ID" value="CAA21795.2"/>
    <property type="molecule type" value="Genomic_DNA"/>
</dbReference>
<dbReference type="PIR" id="T40804">
    <property type="entry name" value="T40804"/>
</dbReference>
<dbReference type="RefSeq" id="NP_596517.2">
    <property type="nucleotide sequence ID" value="NM_001022438.2"/>
</dbReference>
<dbReference type="SMR" id="O94259"/>
<dbReference type="BioGRID" id="277872">
    <property type="interactions" value="64"/>
</dbReference>
<dbReference type="STRING" id="284812.O94259"/>
<dbReference type="iPTMnet" id="O94259"/>
<dbReference type="PaxDb" id="4896-SPBP8B7.10c.1"/>
<dbReference type="EnsemblFungi" id="SPBP8B7.10c.1">
    <property type="protein sequence ID" value="SPBP8B7.10c.1:pep"/>
    <property type="gene ID" value="SPBP8B7.10c"/>
</dbReference>
<dbReference type="GeneID" id="2541361"/>
<dbReference type="KEGG" id="spo:2541361"/>
<dbReference type="PomBase" id="SPBP8B7.10c">
    <property type="gene designation" value="utp16"/>
</dbReference>
<dbReference type="VEuPathDB" id="FungiDB:SPBP8B7.10c"/>
<dbReference type="HOGENOM" id="CLU_850355_0_0_1"/>
<dbReference type="InParanoid" id="O94259"/>
<dbReference type="OMA" id="SQKKRSW"/>
<dbReference type="PRO" id="PR:O94259"/>
<dbReference type="Proteomes" id="UP000002485">
    <property type="component" value="Chromosome II"/>
</dbReference>
<dbReference type="GO" id="GO:0005730">
    <property type="term" value="C:nucleolus"/>
    <property type="evidence" value="ECO:0007005"/>
    <property type="project" value="PomBase"/>
</dbReference>
<dbReference type="GO" id="GO:0005634">
    <property type="term" value="C:nucleus"/>
    <property type="evidence" value="ECO:0007005"/>
    <property type="project" value="PomBase"/>
</dbReference>
<dbReference type="GO" id="GO:0032040">
    <property type="term" value="C:small-subunit processome"/>
    <property type="evidence" value="ECO:0000266"/>
    <property type="project" value="PomBase"/>
</dbReference>
<dbReference type="GO" id="GO:0005732">
    <property type="term" value="C:sno(s)RNA-containing ribonucleoprotein complex"/>
    <property type="evidence" value="ECO:0000266"/>
    <property type="project" value="PomBase"/>
</dbReference>
<dbReference type="GO" id="GO:0030515">
    <property type="term" value="F:snoRNA binding"/>
    <property type="evidence" value="ECO:0000266"/>
    <property type="project" value="PomBase"/>
</dbReference>
<dbReference type="GO" id="GO:0030490">
    <property type="term" value="P:maturation of SSU-rRNA"/>
    <property type="evidence" value="ECO:0000266"/>
    <property type="project" value="PomBase"/>
</dbReference>
<dbReference type="InterPro" id="IPR013268">
    <property type="entry name" value="UTP16"/>
</dbReference>
<dbReference type="Pfam" id="PF08297">
    <property type="entry name" value="U3_snoRNA_assoc"/>
    <property type="match status" value="1"/>
</dbReference>
<organism>
    <name type="scientific">Schizosaccharomyces pombe (strain 972 / ATCC 24843)</name>
    <name type="common">Fission yeast</name>
    <dbReference type="NCBI Taxonomy" id="284812"/>
    <lineage>
        <taxon>Eukaryota</taxon>
        <taxon>Fungi</taxon>
        <taxon>Dikarya</taxon>
        <taxon>Ascomycota</taxon>
        <taxon>Taphrinomycotina</taxon>
        <taxon>Schizosaccharomycetes</taxon>
        <taxon>Schizosaccharomycetales</taxon>
        <taxon>Schizosaccharomycetaceae</taxon>
        <taxon>Schizosaccharomyces</taxon>
    </lineage>
</organism>
<proteinExistence type="evidence at protein level"/>
<protein>
    <recommendedName>
        <fullName>U3 small nucleolar RNA-associated protein 16</fullName>
        <shortName>U3 snoRNA-associated protein 16</shortName>
    </recommendedName>
</protein>
<gene>
    <name type="primary">utp16</name>
    <name type="ORF">SPBP8B7.10c</name>
</gene>
<comment type="function">
    <text evidence="1 2">Functions as part of the small subunit (SSU) processome, first precursor of the small eukaryotic ribosomal subunit that coordinates the first two steps of ribosome biogenesis in transcription of the primary transcript pre-RNA and pre-18S processing (By similarity). During the assembly of the SSU processome in the nucleolus, many ribosome biogenesis factors, an RNA chaperone and ribosomal proteins associate with the nascent pre-rRNA and work in concert to generate RNA folding, modifications, rearrangements and cleavage as well as targeted degradation of pre-ribosomal RNA by the RNA exosome (By similarity).</text>
</comment>
<comment type="subunit">
    <text evidence="1">Component of the ribosomal small subunit (SSU) processome.</text>
</comment>
<comment type="subcellular location">
    <subcellularLocation>
        <location evidence="5">Nucleus</location>
        <location evidence="5">Nucleolus</location>
    </subcellularLocation>
</comment>
<comment type="similarity">
    <text evidence="7">Belongs to the UTP16 family.</text>
</comment>
<reference key="1">
    <citation type="journal article" date="2002" name="Nature">
        <title>The genome sequence of Schizosaccharomyces pombe.</title>
        <authorList>
            <person name="Wood V."/>
            <person name="Gwilliam R."/>
            <person name="Rajandream M.A."/>
            <person name="Lyne M.H."/>
            <person name="Lyne R."/>
            <person name="Stewart A."/>
            <person name="Sgouros J.G."/>
            <person name="Peat N."/>
            <person name="Hayles J."/>
            <person name="Baker S.G."/>
            <person name="Basham D."/>
            <person name="Bowman S."/>
            <person name="Brooks K."/>
            <person name="Brown D."/>
            <person name="Brown S."/>
            <person name="Chillingworth T."/>
            <person name="Churcher C.M."/>
            <person name="Collins M."/>
            <person name="Connor R."/>
            <person name="Cronin A."/>
            <person name="Davis P."/>
            <person name="Feltwell T."/>
            <person name="Fraser A."/>
            <person name="Gentles S."/>
            <person name="Goble A."/>
            <person name="Hamlin N."/>
            <person name="Harris D.E."/>
            <person name="Hidalgo J."/>
            <person name="Hodgson G."/>
            <person name="Holroyd S."/>
            <person name="Hornsby T."/>
            <person name="Howarth S."/>
            <person name="Huckle E.J."/>
            <person name="Hunt S."/>
            <person name="Jagels K."/>
            <person name="James K.D."/>
            <person name="Jones L."/>
            <person name="Jones M."/>
            <person name="Leather S."/>
            <person name="McDonald S."/>
            <person name="McLean J."/>
            <person name="Mooney P."/>
            <person name="Moule S."/>
            <person name="Mungall K.L."/>
            <person name="Murphy L.D."/>
            <person name="Niblett D."/>
            <person name="Odell C."/>
            <person name="Oliver K."/>
            <person name="O'Neil S."/>
            <person name="Pearson D."/>
            <person name="Quail M.A."/>
            <person name="Rabbinowitsch E."/>
            <person name="Rutherford K.M."/>
            <person name="Rutter S."/>
            <person name="Saunders D."/>
            <person name="Seeger K."/>
            <person name="Sharp S."/>
            <person name="Skelton J."/>
            <person name="Simmonds M.N."/>
            <person name="Squares R."/>
            <person name="Squares S."/>
            <person name="Stevens K."/>
            <person name="Taylor K."/>
            <person name="Taylor R.G."/>
            <person name="Tivey A."/>
            <person name="Walsh S.V."/>
            <person name="Warren T."/>
            <person name="Whitehead S."/>
            <person name="Woodward J.R."/>
            <person name="Volckaert G."/>
            <person name="Aert R."/>
            <person name="Robben J."/>
            <person name="Grymonprez B."/>
            <person name="Weltjens I."/>
            <person name="Vanstreels E."/>
            <person name="Rieger M."/>
            <person name="Schaefer M."/>
            <person name="Mueller-Auer S."/>
            <person name="Gabel C."/>
            <person name="Fuchs M."/>
            <person name="Duesterhoeft A."/>
            <person name="Fritzc C."/>
            <person name="Holzer E."/>
            <person name="Moestl D."/>
            <person name="Hilbert H."/>
            <person name="Borzym K."/>
            <person name="Langer I."/>
            <person name="Beck A."/>
            <person name="Lehrach H."/>
            <person name="Reinhardt R."/>
            <person name="Pohl T.M."/>
            <person name="Eger P."/>
            <person name="Zimmermann W."/>
            <person name="Wedler H."/>
            <person name="Wambutt R."/>
            <person name="Purnelle B."/>
            <person name="Goffeau A."/>
            <person name="Cadieu E."/>
            <person name="Dreano S."/>
            <person name="Gloux S."/>
            <person name="Lelaure V."/>
            <person name="Mottier S."/>
            <person name="Galibert F."/>
            <person name="Aves S.J."/>
            <person name="Xiang Z."/>
            <person name="Hunt C."/>
            <person name="Moore K."/>
            <person name="Hurst S.M."/>
            <person name="Lucas M."/>
            <person name="Rochet M."/>
            <person name="Gaillardin C."/>
            <person name="Tallada V.A."/>
            <person name="Garzon A."/>
            <person name="Thode G."/>
            <person name="Daga R.R."/>
            <person name="Cruzado L."/>
            <person name="Jimenez J."/>
            <person name="Sanchez M."/>
            <person name="del Rey F."/>
            <person name="Benito J."/>
            <person name="Dominguez A."/>
            <person name="Revuelta J.L."/>
            <person name="Moreno S."/>
            <person name="Armstrong J."/>
            <person name="Forsburg S.L."/>
            <person name="Cerutti L."/>
            <person name="Lowe T."/>
            <person name="McCombie W.R."/>
            <person name="Paulsen I."/>
            <person name="Potashkin J."/>
            <person name="Shpakovski G.V."/>
            <person name="Ussery D."/>
            <person name="Barrell B.G."/>
            <person name="Nurse P."/>
        </authorList>
    </citation>
    <scope>NUCLEOTIDE SEQUENCE [LARGE SCALE GENOMIC DNA]</scope>
    <source>
        <strain>972 / ATCC 24843</strain>
    </source>
</reference>
<reference key="2">
    <citation type="journal article" date="2011" name="Science">
        <title>Comparative functional genomics of the fission yeasts.</title>
        <authorList>
            <person name="Rhind N."/>
            <person name="Chen Z."/>
            <person name="Yassour M."/>
            <person name="Thompson D.A."/>
            <person name="Haas B.J."/>
            <person name="Habib N."/>
            <person name="Wapinski I."/>
            <person name="Roy S."/>
            <person name="Lin M.F."/>
            <person name="Heiman D.I."/>
            <person name="Young S.K."/>
            <person name="Furuya K."/>
            <person name="Guo Y."/>
            <person name="Pidoux A."/>
            <person name="Chen H.M."/>
            <person name="Robbertse B."/>
            <person name="Goldberg J.M."/>
            <person name="Aoki K."/>
            <person name="Bayne E.H."/>
            <person name="Berlin A.M."/>
            <person name="Desjardins C.A."/>
            <person name="Dobbs E."/>
            <person name="Dukaj L."/>
            <person name="Fan L."/>
            <person name="FitzGerald M.G."/>
            <person name="French C."/>
            <person name="Gujja S."/>
            <person name="Hansen K."/>
            <person name="Keifenheim D."/>
            <person name="Levin J.Z."/>
            <person name="Mosher R.A."/>
            <person name="Mueller C.A."/>
            <person name="Pfiffner J."/>
            <person name="Priest M."/>
            <person name="Russ C."/>
            <person name="Smialowska A."/>
            <person name="Swoboda P."/>
            <person name="Sykes S.M."/>
            <person name="Vaughn M."/>
            <person name="Vengrova S."/>
            <person name="Yoder R."/>
            <person name="Zeng Q."/>
            <person name="Allshire R."/>
            <person name="Baulcombe D."/>
            <person name="Birren B.W."/>
            <person name="Brown W."/>
            <person name="Ekwall K."/>
            <person name="Kellis M."/>
            <person name="Leatherwood J."/>
            <person name="Levin H."/>
            <person name="Margalit H."/>
            <person name="Martienssen R."/>
            <person name="Nieduszynski C.A."/>
            <person name="Spatafora J.W."/>
            <person name="Friedman N."/>
            <person name="Dalgaard J.Z."/>
            <person name="Baumann P."/>
            <person name="Niki H."/>
            <person name="Regev A."/>
            <person name="Nusbaum C."/>
        </authorList>
    </citation>
    <scope>REVISION OF GENE MODEL</scope>
</reference>
<reference key="3">
    <citation type="journal article" date="2006" name="Nat. Biotechnol.">
        <title>ORFeome cloning and global analysis of protein localization in the fission yeast Schizosaccharomyces pombe.</title>
        <authorList>
            <person name="Matsuyama A."/>
            <person name="Arai R."/>
            <person name="Yashiroda Y."/>
            <person name="Shirai A."/>
            <person name="Kamata A."/>
            <person name="Sekido S."/>
            <person name="Kobayashi Y."/>
            <person name="Hashimoto A."/>
            <person name="Hamamoto M."/>
            <person name="Hiraoka Y."/>
            <person name="Horinouchi S."/>
            <person name="Yoshida M."/>
        </authorList>
    </citation>
    <scope>SUBCELLULAR LOCATION [LARGE SCALE ANALYSIS]</scope>
</reference>
<reference key="4">
    <citation type="journal article" date="2008" name="J. Proteome Res.">
        <title>Phosphoproteome analysis of fission yeast.</title>
        <authorList>
            <person name="Wilson-Grady J.T."/>
            <person name="Villen J."/>
            <person name="Gygi S.P."/>
        </authorList>
    </citation>
    <scope>PHOSPHORYLATION [LARGE SCALE ANALYSIS] AT SER-163 AND SER-165</scope>
    <scope>IDENTIFICATION BY MASS SPECTROMETRY</scope>
</reference>